<gene>
    <name type="primary">mtb</name>
</gene>
<organism>
    <name type="scientific">Chionodraco rastrospinosus</name>
    <name type="common">Ocellated icefish</name>
    <dbReference type="NCBI Taxonomy" id="34790"/>
    <lineage>
        <taxon>Eukaryota</taxon>
        <taxon>Metazoa</taxon>
        <taxon>Chordata</taxon>
        <taxon>Craniata</taxon>
        <taxon>Vertebrata</taxon>
        <taxon>Euteleostomi</taxon>
        <taxon>Actinopterygii</taxon>
        <taxon>Neopterygii</taxon>
        <taxon>Teleostei</taxon>
        <taxon>Neoteleostei</taxon>
        <taxon>Acanthomorphata</taxon>
        <taxon>Eupercaria</taxon>
        <taxon>Perciformes</taxon>
        <taxon>Notothenioidei</taxon>
        <taxon>Channichthyidae</taxon>
        <taxon>Chionodraco</taxon>
    </lineage>
</organism>
<proteinExistence type="inferred from homology"/>
<reference key="1">
    <citation type="journal article" date="1997" name="Biochem. J.">
        <title>Difference in hepatic metallothionein content in Antarctic red-blooded and haemoglobinless fish: undetectable metallothionein levels in haemoglobinless fish is accompanied by accumulation of untranslated metallothionein mRNA.</title>
        <authorList>
            <person name="Scudiero R."/>
            <person name="Carginale V."/>
            <person name="Riggio M."/>
            <person name="Capasso C."/>
            <person name="Capasso A."/>
            <person name="Kille P."/>
            <person name="di Prisco G."/>
            <person name="Parisi E."/>
        </authorList>
    </citation>
    <scope>NUCLEOTIDE SEQUENCE [MRNA]</scope>
    <source>
        <tissue>Liver</tissue>
    </source>
</reference>
<sequence length="60" mass="5992">MDPCECSKSGTCNCGGSCTCTNCSCTSCKKSCCPCCPSGCTKCASGCVCKGKTCDTSCCQ</sequence>
<keyword id="KW-0479">Metal-binding</keyword>
<keyword id="KW-0480">Metal-thiolate cluster</keyword>
<dbReference type="EMBL" id="Z72484">
    <property type="protein sequence ID" value="CAA96565.1"/>
    <property type="molecule type" value="mRNA"/>
</dbReference>
<dbReference type="SMR" id="P62679"/>
<dbReference type="GO" id="GO:0046872">
    <property type="term" value="F:metal ion binding"/>
    <property type="evidence" value="ECO:0007669"/>
    <property type="project" value="UniProtKB-KW"/>
</dbReference>
<dbReference type="FunFam" id="4.10.10.10:FF:000001">
    <property type="entry name" value="Metallothionein"/>
    <property type="match status" value="1"/>
</dbReference>
<dbReference type="Gene3D" id="4.10.10.10">
    <property type="entry name" value="Metallothionein Isoform II"/>
    <property type="match status" value="1"/>
</dbReference>
<dbReference type="InterPro" id="IPR017854">
    <property type="entry name" value="Metalthion_dom_sf"/>
</dbReference>
<dbReference type="InterPro" id="IPR023587">
    <property type="entry name" value="Metalthion_dom_sf_vert"/>
</dbReference>
<dbReference type="InterPro" id="IPR000006">
    <property type="entry name" value="Metalthion_vert"/>
</dbReference>
<dbReference type="InterPro" id="IPR018064">
    <property type="entry name" value="Metalthion_vert_metal_BS"/>
</dbReference>
<dbReference type="PANTHER" id="PTHR23299">
    <property type="entry name" value="METALLOTHIONEIN"/>
    <property type="match status" value="1"/>
</dbReference>
<dbReference type="PANTHER" id="PTHR23299:SF24">
    <property type="entry name" value="METALLOTHIONEIN-1X"/>
    <property type="match status" value="1"/>
</dbReference>
<dbReference type="Pfam" id="PF00131">
    <property type="entry name" value="Metallothio"/>
    <property type="match status" value="1"/>
</dbReference>
<dbReference type="PRINTS" id="PR00860">
    <property type="entry name" value="MTVERTEBRATE"/>
</dbReference>
<dbReference type="SUPFAM" id="SSF57868">
    <property type="entry name" value="Metallothionein"/>
    <property type="match status" value="1"/>
</dbReference>
<dbReference type="PROSITE" id="PS00203">
    <property type="entry name" value="METALLOTHIONEIN_VRT"/>
    <property type="match status" value="1"/>
</dbReference>
<protein>
    <recommendedName>
        <fullName>Metallothionein B</fullName>
        <shortName>MT-B</shortName>
        <shortName>MT-II</shortName>
    </recommendedName>
</protein>
<evidence type="ECO:0000250" key="1"/>
<evidence type="ECO:0000250" key="2">
    <source>
        <dbReference type="UniProtKB" id="P02795"/>
    </source>
</evidence>
<evidence type="ECO:0000250" key="3">
    <source>
        <dbReference type="UniProtKB" id="P62339"/>
    </source>
</evidence>
<evidence type="ECO:0000305" key="4"/>
<name>MTB_CHIRA</name>
<accession>P62679</accession>
<accession>Q92145</accession>
<feature type="chain" id="PRO_0000197278" description="Metallothionein B">
    <location>
        <begin position="1"/>
        <end position="60"/>
    </location>
</feature>
<feature type="region of interest" description="Beta">
    <location>
        <begin position="1"/>
        <end position="28"/>
    </location>
</feature>
<feature type="region of interest" description="Alpha">
    <location>
        <begin position="29"/>
        <end position="60"/>
    </location>
</feature>
<feature type="binding site" evidence="2">
    <location>
        <position position="4"/>
    </location>
    <ligand>
        <name>a divalent metal cation</name>
        <dbReference type="ChEBI" id="CHEBI:60240"/>
        <label>1</label>
        <note>in cluster B</note>
    </ligand>
</feature>
<feature type="binding site" evidence="2">
    <location>
        <position position="6"/>
    </location>
    <ligand>
        <name>a divalent metal cation</name>
        <dbReference type="ChEBI" id="CHEBI:60240"/>
        <label>1</label>
        <note>in cluster B</note>
    </ligand>
</feature>
<feature type="binding site" evidence="2">
    <location>
        <position position="6"/>
    </location>
    <ligand>
        <name>a divalent metal cation</name>
        <dbReference type="ChEBI" id="CHEBI:60240"/>
        <label>2</label>
        <note>in cluster B</note>
    </ligand>
</feature>
<feature type="binding site" evidence="2">
    <location>
        <position position="12"/>
    </location>
    <ligand>
        <name>a divalent metal cation</name>
        <dbReference type="ChEBI" id="CHEBI:60240"/>
        <label>2</label>
        <note>in cluster B</note>
    </ligand>
</feature>
<feature type="binding site" evidence="2">
    <location>
        <position position="14"/>
    </location>
    <ligand>
        <name>a divalent metal cation</name>
        <dbReference type="ChEBI" id="CHEBI:60240"/>
        <label>2</label>
        <note>in cluster B</note>
    </ligand>
</feature>
<feature type="binding site" evidence="2">
    <location>
        <position position="14"/>
    </location>
    <ligand>
        <name>a divalent metal cation</name>
        <dbReference type="ChEBI" id="CHEBI:60240"/>
        <label>3</label>
        <note>in cluster B</note>
    </ligand>
</feature>
<feature type="binding site" evidence="2">
    <location>
        <position position="18"/>
    </location>
    <ligand>
        <name>a divalent metal cation</name>
        <dbReference type="ChEBI" id="CHEBI:60240"/>
        <label>3</label>
        <note>in cluster B</note>
    </ligand>
</feature>
<feature type="binding site" evidence="2">
    <location>
        <position position="20"/>
    </location>
    <ligand>
        <name>a divalent metal cation</name>
        <dbReference type="ChEBI" id="CHEBI:60240"/>
        <label>1</label>
        <note>in cluster B</note>
    </ligand>
</feature>
<feature type="binding site" evidence="2">
    <location>
        <position position="23"/>
    </location>
    <ligand>
        <name>a divalent metal cation</name>
        <dbReference type="ChEBI" id="CHEBI:60240"/>
        <label>1</label>
        <note>in cluster B</note>
    </ligand>
</feature>
<feature type="binding site" evidence="2">
    <location>
        <position position="23"/>
    </location>
    <ligand>
        <name>a divalent metal cation</name>
        <dbReference type="ChEBI" id="CHEBI:60240"/>
        <label>3</label>
        <note>in cluster B</note>
    </ligand>
</feature>
<feature type="binding site" evidence="2">
    <location>
        <position position="25"/>
    </location>
    <ligand>
        <name>a divalent metal cation</name>
        <dbReference type="ChEBI" id="CHEBI:60240"/>
        <label>2</label>
        <note>in cluster B</note>
    </ligand>
</feature>
<feature type="binding site" evidence="2">
    <location>
        <position position="28"/>
    </location>
    <ligand>
        <name>a divalent metal cation</name>
        <dbReference type="ChEBI" id="CHEBI:60240"/>
        <label>3</label>
        <note>in cluster B</note>
    </ligand>
</feature>
<feature type="binding site" evidence="2">
    <location>
        <position position="32"/>
    </location>
    <ligand>
        <name>a divalent metal cation</name>
        <dbReference type="ChEBI" id="CHEBI:60240"/>
        <label>4</label>
        <note>in cluster A</note>
    </ligand>
</feature>
<feature type="binding site" evidence="2">
    <location>
        <position position="33"/>
    </location>
    <ligand>
        <name>a divalent metal cation</name>
        <dbReference type="ChEBI" id="CHEBI:60240"/>
        <label>4</label>
        <note>in cluster A</note>
    </ligand>
</feature>
<feature type="binding site" evidence="2">
    <location>
        <position position="33"/>
    </location>
    <ligand>
        <name>a divalent metal cation</name>
        <dbReference type="ChEBI" id="CHEBI:60240"/>
        <label>5</label>
        <note>in cluster A</note>
    </ligand>
</feature>
<feature type="binding site" evidence="2">
    <location>
        <position position="35"/>
    </location>
    <ligand>
        <name>a divalent metal cation</name>
        <dbReference type="ChEBI" id="CHEBI:60240"/>
        <label>5</label>
        <note>in cluster A</note>
    </ligand>
</feature>
<feature type="binding site" evidence="2">
    <location>
        <position position="36"/>
    </location>
    <ligand>
        <name>a divalent metal cation</name>
        <dbReference type="ChEBI" id="CHEBI:60240"/>
        <label>5</label>
        <note>in cluster A</note>
    </ligand>
</feature>
<feature type="binding site" evidence="2">
    <location>
        <position position="36"/>
    </location>
    <ligand>
        <name>a divalent metal cation</name>
        <dbReference type="ChEBI" id="CHEBI:60240"/>
        <label>6</label>
        <note>in cluster A</note>
    </ligand>
</feature>
<feature type="binding site" evidence="2">
    <location>
        <position position="40"/>
    </location>
    <ligand>
        <name>a divalent metal cation</name>
        <dbReference type="ChEBI" id="CHEBI:60240"/>
        <label>6</label>
        <note>in cluster A</note>
    </ligand>
</feature>
<feature type="binding site" evidence="2">
    <location>
        <position position="43"/>
    </location>
    <ligand>
        <name>a divalent metal cation</name>
        <dbReference type="ChEBI" id="CHEBI:60240"/>
        <label>4</label>
        <note>in cluster A</note>
    </ligand>
</feature>
<feature type="binding site" evidence="2">
    <location>
        <position position="43"/>
    </location>
    <ligand>
        <name>a divalent metal cation</name>
        <dbReference type="ChEBI" id="CHEBI:60240"/>
        <label>6</label>
        <note>in cluster A</note>
    </ligand>
</feature>
<feature type="binding site" evidence="2">
    <location>
        <position position="47"/>
    </location>
    <ligand>
        <name>a divalent metal cation</name>
        <dbReference type="ChEBI" id="CHEBI:60240"/>
        <label>4</label>
        <note>in cluster A</note>
    </ligand>
</feature>
<feature type="binding site" evidence="2">
    <location>
        <position position="49"/>
    </location>
    <ligand>
        <name>a divalent metal cation</name>
        <dbReference type="ChEBI" id="CHEBI:60240"/>
        <label>5</label>
        <note>in cluster A</note>
    </ligand>
</feature>
<feature type="binding site" evidence="2">
    <location>
        <position position="49"/>
    </location>
    <ligand>
        <name>a divalent metal cation</name>
        <dbReference type="ChEBI" id="CHEBI:60240"/>
        <label>7</label>
        <note>in cluster A</note>
    </ligand>
</feature>
<feature type="binding site" evidence="3">
    <location>
        <position position="54"/>
    </location>
    <ligand>
        <name>a divalent metal cation</name>
        <dbReference type="ChEBI" id="CHEBI:60240"/>
        <label>7</label>
        <note>in cluster A</note>
    </ligand>
</feature>
<feature type="binding site" evidence="2">
    <location>
        <position position="58"/>
    </location>
    <ligand>
        <name>a divalent metal cation</name>
        <dbReference type="ChEBI" id="CHEBI:60240"/>
        <label>7</label>
        <note>in cluster A</note>
    </ligand>
</feature>
<feature type="binding site" evidence="2">
    <location>
        <position position="59"/>
    </location>
    <ligand>
        <name>a divalent metal cation</name>
        <dbReference type="ChEBI" id="CHEBI:60240"/>
        <label>6</label>
        <note>in cluster A</note>
    </ligand>
</feature>
<feature type="binding site" evidence="2">
    <location>
        <position position="59"/>
    </location>
    <ligand>
        <name>a divalent metal cation</name>
        <dbReference type="ChEBI" id="CHEBI:60240"/>
        <label>7</label>
        <note>in cluster A</note>
    </ligand>
</feature>
<comment type="function">
    <text evidence="1">Metallothioneins have a high content of cysteine residues that bind various heavy metals.</text>
</comment>
<comment type="domain">
    <text>Class I metallothioneins contain 2 metal-binding domains: four divalent ions are chelated within cluster A of the alpha domain and are coordinated via cysteinyl thiolate bridges to 11 cysteine ligands. Cluster B, the corresponding region within the beta domain, can ligate three divalent ions to 9 cysteines.</text>
</comment>
<comment type="similarity">
    <text evidence="4">Belongs to the metallothionein superfamily. Type 1 family.</text>
</comment>